<accession>A0KAS6</accession>
<dbReference type="EC" id="1.1.1.94" evidence="1"/>
<dbReference type="EMBL" id="CP000458">
    <property type="protein sequence ID" value="ABK09603.1"/>
    <property type="molecule type" value="Genomic_DNA"/>
</dbReference>
<dbReference type="RefSeq" id="WP_011694416.1">
    <property type="nucleotide sequence ID" value="NC_008542.1"/>
</dbReference>
<dbReference type="SMR" id="A0KAS6"/>
<dbReference type="KEGG" id="bch:Bcen2424_2853"/>
<dbReference type="HOGENOM" id="CLU_033449_0_2_4"/>
<dbReference type="UniPathway" id="UPA00940"/>
<dbReference type="GO" id="GO:0005829">
    <property type="term" value="C:cytosol"/>
    <property type="evidence" value="ECO:0007669"/>
    <property type="project" value="TreeGrafter"/>
</dbReference>
<dbReference type="GO" id="GO:0047952">
    <property type="term" value="F:glycerol-3-phosphate dehydrogenase [NAD(P)+] activity"/>
    <property type="evidence" value="ECO:0007669"/>
    <property type="project" value="UniProtKB-UniRule"/>
</dbReference>
<dbReference type="GO" id="GO:0051287">
    <property type="term" value="F:NAD binding"/>
    <property type="evidence" value="ECO:0007669"/>
    <property type="project" value="InterPro"/>
</dbReference>
<dbReference type="GO" id="GO:0005975">
    <property type="term" value="P:carbohydrate metabolic process"/>
    <property type="evidence" value="ECO:0007669"/>
    <property type="project" value="InterPro"/>
</dbReference>
<dbReference type="GO" id="GO:0046167">
    <property type="term" value="P:glycerol-3-phosphate biosynthetic process"/>
    <property type="evidence" value="ECO:0007669"/>
    <property type="project" value="UniProtKB-UniRule"/>
</dbReference>
<dbReference type="GO" id="GO:0046168">
    <property type="term" value="P:glycerol-3-phosphate catabolic process"/>
    <property type="evidence" value="ECO:0007669"/>
    <property type="project" value="InterPro"/>
</dbReference>
<dbReference type="GO" id="GO:0006650">
    <property type="term" value="P:glycerophospholipid metabolic process"/>
    <property type="evidence" value="ECO:0007669"/>
    <property type="project" value="UniProtKB-UniRule"/>
</dbReference>
<dbReference type="GO" id="GO:0008654">
    <property type="term" value="P:phospholipid biosynthetic process"/>
    <property type="evidence" value="ECO:0007669"/>
    <property type="project" value="UniProtKB-KW"/>
</dbReference>
<dbReference type="FunFam" id="1.10.1040.10:FF:000001">
    <property type="entry name" value="Glycerol-3-phosphate dehydrogenase [NAD(P)+]"/>
    <property type="match status" value="1"/>
</dbReference>
<dbReference type="FunFam" id="3.40.50.720:FF:000019">
    <property type="entry name" value="Glycerol-3-phosphate dehydrogenase [NAD(P)+]"/>
    <property type="match status" value="1"/>
</dbReference>
<dbReference type="Gene3D" id="1.10.1040.10">
    <property type="entry name" value="N-(1-d-carboxylethyl)-l-norvaline Dehydrogenase, domain 2"/>
    <property type="match status" value="1"/>
</dbReference>
<dbReference type="Gene3D" id="3.40.50.720">
    <property type="entry name" value="NAD(P)-binding Rossmann-like Domain"/>
    <property type="match status" value="1"/>
</dbReference>
<dbReference type="HAMAP" id="MF_00394">
    <property type="entry name" value="NAD_Glyc3P_dehydrog"/>
    <property type="match status" value="1"/>
</dbReference>
<dbReference type="InterPro" id="IPR008927">
    <property type="entry name" value="6-PGluconate_DH-like_C_sf"/>
</dbReference>
<dbReference type="InterPro" id="IPR013328">
    <property type="entry name" value="6PGD_dom2"/>
</dbReference>
<dbReference type="InterPro" id="IPR006168">
    <property type="entry name" value="G3P_DH_NAD-dep"/>
</dbReference>
<dbReference type="InterPro" id="IPR006109">
    <property type="entry name" value="G3P_DH_NAD-dep_C"/>
</dbReference>
<dbReference type="InterPro" id="IPR011128">
    <property type="entry name" value="G3P_DH_NAD-dep_N"/>
</dbReference>
<dbReference type="InterPro" id="IPR036291">
    <property type="entry name" value="NAD(P)-bd_dom_sf"/>
</dbReference>
<dbReference type="NCBIfam" id="NF000940">
    <property type="entry name" value="PRK00094.1-2"/>
    <property type="match status" value="1"/>
</dbReference>
<dbReference type="NCBIfam" id="NF000942">
    <property type="entry name" value="PRK00094.1-4"/>
    <property type="match status" value="1"/>
</dbReference>
<dbReference type="PANTHER" id="PTHR11728">
    <property type="entry name" value="GLYCEROL-3-PHOSPHATE DEHYDROGENASE"/>
    <property type="match status" value="1"/>
</dbReference>
<dbReference type="PANTHER" id="PTHR11728:SF1">
    <property type="entry name" value="GLYCEROL-3-PHOSPHATE DEHYDROGENASE [NAD(+)] 2, CHLOROPLASTIC"/>
    <property type="match status" value="1"/>
</dbReference>
<dbReference type="Pfam" id="PF07479">
    <property type="entry name" value="NAD_Gly3P_dh_C"/>
    <property type="match status" value="1"/>
</dbReference>
<dbReference type="Pfam" id="PF01210">
    <property type="entry name" value="NAD_Gly3P_dh_N"/>
    <property type="match status" value="1"/>
</dbReference>
<dbReference type="PIRSF" id="PIRSF000114">
    <property type="entry name" value="Glycerol-3-P_dh"/>
    <property type="match status" value="1"/>
</dbReference>
<dbReference type="PRINTS" id="PR00077">
    <property type="entry name" value="GPDHDRGNASE"/>
</dbReference>
<dbReference type="SUPFAM" id="SSF48179">
    <property type="entry name" value="6-phosphogluconate dehydrogenase C-terminal domain-like"/>
    <property type="match status" value="1"/>
</dbReference>
<dbReference type="SUPFAM" id="SSF51735">
    <property type="entry name" value="NAD(P)-binding Rossmann-fold domains"/>
    <property type="match status" value="1"/>
</dbReference>
<dbReference type="PROSITE" id="PS00957">
    <property type="entry name" value="NAD_G3PDH"/>
    <property type="match status" value="1"/>
</dbReference>
<comment type="function">
    <text evidence="1">Catalyzes the reduction of the glycolytic intermediate dihydroxyacetone phosphate (DHAP) to sn-glycerol 3-phosphate (G3P), the key precursor for phospholipid synthesis.</text>
</comment>
<comment type="catalytic activity">
    <reaction evidence="1">
        <text>sn-glycerol 3-phosphate + NAD(+) = dihydroxyacetone phosphate + NADH + H(+)</text>
        <dbReference type="Rhea" id="RHEA:11092"/>
        <dbReference type="ChEBI" id="CHEBI:15378"/>
        <dbReference type="ChEBI" id="CHEBI:57540"/>
        <dbReference type="ChEBI" id="CHEBI:57597"/>
        <dbReference type="ChEBI" id="CHEBI:57642"/>
        <dbReference type="ChEBI" id="CHEBI:57945"/>
        <dbReference type="EC" id="1.1.1.94"/>
    </reaction>
    <physiologicalReaction direction="right-to-left" evidence="1">
        <dbReference type="Rhea" id="RHEA:11094"/>
    </physiologicalReaction>
</comment>
<comment type="catalytic activity">
    <reaction evidence="1">
        <text>sn-glycerol 3-phosphate + NADP(+) = dihydroxyacetone phosphate + NADPH + H(+)</text>
        <dbReference type="Rhea" id="RHEA:11096"/>
        <dbReference type="ChEBI" id="CHEBI:15378"/>
        <dbReference type="ChEBI" id="CHEBI:57597"/>
        <dbReference type="ChEBI" id="CHEBI:57642"/>
        <dbReference type="ChEBI" id="CHEBI:57783"/>
        <dbReference type="ChEBI" id="CHEBI:58349"/>
        <dbReference type="EC" id="1.1.1.94"/>
    </reaction>
    <physiologicalReaction direction="right-to-left" evidence="1">
        <dbReference type="Rhea" id="RHEA:11098"/>
    </physiologicalReaction>
</comment>
<comment type="pathway">
    <text evidence="1">Membrane lipid metabolism; glycerophospholipid metabolism.</text>
</comment>
<comment type="subcellular location">
    <subcellularLocation>
        <location evidence="1">Cytoplasm</location>
    </subcellularLocation>
</comment>
<comment type="similarity">
    <text evidence="1">Belongs to the NAD-dependent glycerol-3-phosphate dehydrogenase family.</text>
</comment>
<reference key="1">
    <citation type="submission" date="2006-08" db="EMBL/GenBank/DDBJ databases">
        <title>Complete sequence of chromosome 1 of Burkholderia cenocepacia HI2424.</title>
        <authorList>
            <person name="Copeland A."/>
            <person name="Lucas S."/>
            <person name="Lapidus A."/>
            <person name="Barry K."/>
            <person name="Detter J.C."/>
            <person name="Glavina del Rio T."/>
            <person name="Hammon N."/>
            <person name="Israni S."/>
            <person name="Pitluck S."/>
            <person name="Chain P."/>
            <person name="Malfatti S."/>
            <person name="Shin M."/>
            <person name="Vergez L."/>
            <person name="Schmutz J."/>
            <person name="Larimer F."/>
            <person name="Land M."/>
            <person name="Hauser L."/>
            <person name="Kyrpides N."/>
            <person name="Kim E."/>
            <person name="LiPuma J.J."/>
            <person name="Gonzalez C.F."/>
            <person name="Konstantinidis K."/>
            <person name="Tiedje J.M."/>
            <person name="Richardson P."/>
        </authorList>
    </citation>
    <scope>NUCLEOTIDE SEQUENCE [LARGE SCALE GENOMIC DNA]</scope>
    <source>
        <strain>HI2424</strain>
    </source>
</reference>
<proteinExistence type="inferred from homology"/>
<sequence>MKVAVLGAGAWGTALAGHLAARHDTLLWARDAALIAGLQARHENSRYLDGIALPDALRYDADLGAALAHGAADDALCVIAAPVAGLRTLCHAMRDAGCVPAHVVWVCKGFEADTHLLPHQVIAAELPEQQSNGVLSGPSFAREVGQSLPVALTVASVSAECRERTLAAFHHGAMRIYTGDDVVGVEVGGAVKNVLAIATGISDGLGLGLNARAALITRGLAEMSRLGVALGGRAETFTGLTGLGDLILTATGDLSRNRTVGLQLAAGRTLNDILGALGHVAEGVRCAQAVLALARAQSIDMPITQAVCGVLFDGIAPRDAVSGLLRRDARAE</sequence>
<gene>
    <name evidence="1" type="primary">gpsA</name>
    <name type="ordered locus">Bcen2424_2853</name>
</gene>
<evidence type="ECO:0000255" key="1">
    <source>
        <dbReference type="HAMAP-Rule" id="MF_00394"/>
    </source>
</evidence>
<protein>
    <recommendedName>
        <fullName evidence="1">Glycerol-3-phosphate dehydrogenase [NAD(P)+]</fullName>
        <ecNumber evidence="1">1.1.1.94</ecNumber>
    </recommendedName>
    <alternativeName>
        <fullName evidence="1">NAD(P)(+)-dependent glycerol-3-phosphate dehydrogenase</fullName>
    </alternativeName>
    <alternativeName>
        <fullName evidence="1">NAD(P)H-dependent dihydroxyacetone-phosphate reductase</fullName>
    </alternativeName>
</protein>
<keyword id="KW-0963">Cytoplasm</keyword>
<keyword id="KW-0444">Lipid biosynthesis</keyword>
<keyword id="KW-0443">Lipid metabolism</keyword>
<keyword id="KW-0520">NAD</keyword>
<keyword id="KW-0521">NADP</keyword>
<keyword id="KW-0547">Nucleotide-binding</keyword>
<keyword id="KW-0560">Oxidoreductase</keyword>
<keyword id="KW-0594">Phospholipid biosynthesis</keyword>
<keyword id="KW-1208">Phospholipid metabolism</keyword>
<organism>
    <name type="scientific">Burkholderia cenocepacia (strain HI2424)</name>
    <dbReference type="NCBI Taxonomy" id="331272"/>
    <lineage>
        <taxon>Bacteria</taxon>
        <taxon>Pseudomonadati</taxon>
        <taxon>Pseudomonadota</taxon>
        <taxon>Betaproteobacteria</taxon>
        <taxon>Burkholderiales</taxon>
        <taxon>Burkholderiaceae</taxon>
        <taxon>Burkholderia</taxon>
        <taxon>Burkholderia cepacia complex</taxon>
    </lineage>
</organism>
<feature type="chain" id="PRO_1000049486" description="Glycerol-3-phosphate dehydrogenase [NAD(P)+]">
    <location>
        <begin position="1"/>
        <end position="332"/>
    </location>
</feature>
<feature type="active site" description="Proton acceptor" evidence="1">
    <location>
        <position position="192"/>
    </location>
</feature>
<feature type="binding site" evidence="1">
    <location>
        <position position="11"/>
    </location>
    <ligand>
        <name>NADPH</name>
        <dbReference type="ChEBI" id="CHEBI:57783"/>
    </ligand>
</feature>
<feature type="binding site" evidence="1">
    <location>
        <position position="30"/>
    </location>
    <ligand>
        <name>NADPH</name>
        <dbReference type="ChEBI" id="CHEBI:57783"/>
    </ligand>
</feature>
<feature type="binding site" evidence="1">
    <location>
        <position position="108"/>
    </location>
    <ligand>
        <name>NADPH</name>
        <dbReference type="ChEBI" id="CHEBI:57783"/>
    </ligand>
</feature>
<feature type="binding site" evidence="1">
    <location>
        <position position="108"/>
    </location>
    <ligand>
        <name>sn-glycerol 3-phosphate</name>
        <dbReference type="ChEBI" id="CHEBI:57597"/>
    </ligand>
</feature>
<feature type="binding site" evidence="1">
    <location>
        <position position="137"/>
    </location>
    <ligand>
        <name>sn-glycerol 3-phosphate</name>
        <dbReference type="ChEBI" id="CHEBI:57597"/>
    </ligand>
</feature>
<feature type="binding site" evidence="1">
    <location>
        <position position="139"/>
    </location>
    <ligand>
        <name>sn-glycerol 3-phosphate</name>
        <dbReference type="ChEBI" id="CHEBI:57597"/>
    </ligand>
</feature>
<feature type="binding site" evidence="1">
    <location>
        <position position="141"/>
    </location>
    <ligand>
        <name>NADPH</name>
        <dbReference type="ChEBI" id="CHEBI:57783"/>
    </ligand>
</feature>
<feature type="binding site" evidence="1">
    <location>
        <position position="192"/>
    </location>
    <ligand>
        <name>sn-glycerol 3-phosphate</name>
        <dbReference type="ChEBI" id="CHEBI:57597"/>
    </ligand>
</feature>
<feature type="binding site" evidence="1">
    <location>
        <position position="245"/>
    </location>
    <ligand>
        <name>sn-glycerol 3-phosphate</name>
        <dbReference type="ChEBI" id="CHEBI:57597"/>
    </ligand>
</feature>
<feature type="binding site" evidence="1">
    <location>
        <position position="255"/>
    </location>
    <ligand>
        <name>sn-glycerol 3-phosphate</name>
        <dbReference type="ChEBI" id="CHEBI:57597"/>
    </ligand>
</feature>
<feature type="binding site" evidence="1">
    <location>
        <position position="256"/>
    </location>
    <ligand>
        <name>NADPH</name>
        <dbReference type="ChEBI" id="CHEBI:57783"/>
    </ligand>
</feature>
<feature type="binding site" evidence="1">
    <location>
        <position position="256"/>
    </location>
    <ligand>
        <name>sn-glycerol 3-phosphate</name>
        <dbReference type="ChEBI" id="CHEBI:57597"/>
    </ligand>
</feature>
<feature type="binding site" evidence="1">
    <location>
        <position position="257"/>
    </location>
    <ligand>
        <name>sn-glycerol 3-phosphate</name>
        <dbReference type="ChEBI" id="CHEBI:57597"/>
    </ligand>
</feature>
<feature type="binding site" evidence="1">
    <location>
        <position position="280"/>
    </location>
    <ligand>
        <name>NADPH</name>
        <dbReference type="ChEBI" id="CHEBI:57783"/>
    </ligand>
</feature>
<feature type="binding site" evidence="1">
    <location>
        <position position="282"/>
    </location>
    <ligand>
        <name>NADPH</name>
        <dbReference type="ChEBI" id="CHEBI:57783"/>
    </ligand>
</feature>
<name>GPDA_BURCH</name>